<keyword id="KW-0002">3D-structure</keyword>
<keyword id="KW-0175">Coiled coil</keyword>
<keyword id="KW-0479">Metal-binding</keyword>
<keyword id="KW-1267">Proteomics identification</keyword>
<keyword id="KW-1185">Reference proteome</keyword>
<keyword id="KW-0808">Transferase</keyword>
<keyword id="KW-0833">Ubl conjugation pathway</keyword>
<keyword id="KW-0862">Zinc</keyword>
<keyword id="KW-0863">Zinc-finger</keyword>
<organism>
    <name type="scientific">Homo sapiens</name>
    <name type="common">Human</name>
    <dbReference type="NCBI Taxonomy" id="9606"/>
    <lineage>
        <taxon>Eukaryota</taxon>
        <taxon>Metazoa</taxon>
        <taxon>Chordata</taxon>
        <taxon>Craniata</taxon>
        <taxon>Vertebrata</taxon>
        <taxon>Euteleostomi</taxon>
        <taxon>Mammalia</taxon>
        <taxon>Eutheria</taxon>
        <taxon>Euarchontoglires</taxon>
        <taxon>Primates</taxon>
        <taxon>Haplorrhini</taxon>
        <taxon>Catarrhini</taxon>
        <taxon>Hominidae</taxon>
        <taxon>Homo</taxon>
    </lineage>
</organism>
<sequence length="486" mass="54766">MAWAPPGERLREDARCPVCLDFLQEPVSVDCGHSFCLRCISEFCEKSDGAQGGVYACPQCRGPFRPSGFRPNRQLAGLVESVRRLGLGAGPGARRCARHGEDLSRFCEEDEAALCWVCDAGPEHRTHRTAPLQEAAGSYQVKLQMALELMRKELEDALTQEANVGKKTVIWKEKVEMQRQRFRLEFEKHRGFLAQEEQRQLRRLEAEERATLQRLRESKSRLVQQSKALKELADELQERCQRPALGLLEGVRGVLSRSKAVTRLEAENIPMELKTACCIPGRRELLRKFQVDVKLDPATAHPSLLLTADLRSVQDGEPWRDVPNNPERFDTWPCILGLQSFSSGRHYWEVLVGEGAEWGLGVCQDTLPRKGETTPSPENGVWALWLLKGNEYMVLASPSVPLLQLESPRCIGIFLDYEAGEISFYNVTDGSYIYTFNQLFSGLLRPYFFICDATPLILPPTTIAGSGNWASRDHLDPASDVRDDHL</sequence>
<feature type="chain" id="PRO_0000272301" description="E3 ubiquitin-protein ligase TRIM58">
    <location>
        <begin position="1"/>
        <end position="486"/>
    </location>
</feature>
<feature type="domain" description="B30.2/SPRY" evidence="4">
    <location>
        <begin position="273"/>
        <end position="463"/>
    </location>
</feature>
<feature type="zinc finger region" description="RING-type" evidence="3">
    <location>
        <begin position="16"/>
        <end position="61"/>
    </location>
</feature>
<feature type="zinc finger region" description="B box-type" evidence="2">
    <location>
        <begin position="91"/>
        <end position="132"/>
    </location>
</feature>
<feature type="coiled-coil region" evidence="1">
    <location>
        <begin position="193"/>
        <end position="242"/>
    </location>
</feature>
<feature type="binding site" evidence="2">
    <location>
        <position position="96"/>
    </location>
    <ligand>
        <name>Zn(2+)</name>
        <dbReference type="ChEBI" id="CHEBI:29105"/>
    </ligand>
</feature>
<feature type="binding site" evidence="2">
    <location>
        <position position="99"/>
    </location>
    <ligand>
        <name>Zn(2+)</name>
        <dbReference type="ChEBI" id="CHEBI:29105"/>
    </ligand>
</feature>
<feature type="binding site" evidence="2">
    <location>
        <position position="118"/>
    </location>
    <ligand>
        <name>Zn(2+)</name>
        <dbReference type="ChEBI" id="CHEBI:29105"/>
    </ligand>
</feature>
<feature type="binding site" evidence="2">
    <location>
        <position position="124"/>
    </location>
    <ligand>
        <name>Zn(2+)</name>
        <dbReference type="ChEBI" id="CHEBI:29105"/>
    </ligand>
</feature>
<feature type="sequence variant" id="VAR_030036" description="In dbSNP:rs11204523." evidence="6">
    <original>W</original>
    <variation>S</variation>
    <location>
        <position position="3"/>
    </location>
</feature>
<feature type="sequence variant" id="VAR_030037" description="In dbSNP:rs1339847.">
    <original>V</original>
    <variation>I</variation>
    <location>
        <position position="322"/>
    </location>
</feature>
<feature type="sequence variant" id="VAR_030038" description="In dbSNP:rs3811444." evidence="6">
    <original>T</original>
    <variation>M</variation>
    <location>
        <position position="374"/>
    </location>
</feature>
<feature type="sequence conflict" description="In Ref. 1; AAM63958." evidence="7" ref="1">
    <original>D</original>
    <variation>G</variation>
    <location>
        <position position="292"/>
    </location>
</feature>
<feature type="helix" evidence="8">
    <location>
        <begin position="259"/>
        <end position="267"/>
    </location>
</feature>
<feature type="helix" evidence="8">
    <location>
        <begin position="269"/>
        <end position="273"/>
    </location>
</feature>
<feature type="helix" evidence="9">
    <location>
        <begin position="282"/>
        <end position="287"/>
    </location>
</feature>
<feature type="helix" evidence="9">
    <location>
        <begin position="297"/>
        <end position="299"/>
    </location>
</feature>
<feature type="strand" evidence="8">
    <location>
        <begin position="304"/>
        <end position="306"/>
    </location>
</feature>
<feature type="strand" evidence="9">
    <location>
        <begin position="310"/>
        <end position="314"/>
    </location>
</feature>
<feature type="strand" evidence="9">
    <location>
        <begin position="330"/>
        <end position="332"/>
    </location>
</feature>
<feature type="strand" evidence="9">
    <location>
        <begin position="334"/>
        <end position="338"/>
    </location>
</feature>
<feature type="strand" evidence="9">
    <location>
        <begin position="341"/>
        <end position="351"/>
    </location>
</feature>
<feature type="strand" evidence="9">
    <location>
        <begin position="358"/>
        <end position="364"/>
    </location>
</feature>
<feature type="strand" evidence="9">
    <location>
        <begin position="369"/>
        <end position="371"/>
    </location>
</feature>
<feature type="helix" evidence="9">
    <location>
        <begin position="377"/>
        <end position="379"/>
    </location>
</feature>
<feature type="strand" evidence="9">
    <location>
        <begin position="381"/>
        <end position="387"/>
    </location>
</feature>
<feature type="turn" evidence="9">
    <location>
        <begin position="388"/>
        <end position="390"/>
    </location>
</feature>
<feature type="strand" evidence="9">
    <location>
        <begin position="391"/>
        <end position="393"/>
    </location>
</feature>
<feature type="strand" evidence="8">
    <location>
        <begin position="395"/>
        <end position="398"/>
    </location>
</feature>
<feature type="helix" evidence="9">
    <location>
        <begin position="400"/>
        <end position="403"/>
    </location>
</feature>
<feature type="strand" evidence="9">
    <location>
        <begin position="409"/>
        <end position="416"/>
    </location>
</feature>
<feature type="turn" evidence="9">
    <location>
        <begin position="417"/>
        <end position="420"/>
    </location>
</feature>
<feature type="strand" evidence="9">
    <location>
        <begin position="421"/>
        <end position="426"/>
    </location>
</feature>
<feature type="turn" evidence="9">
    <location>
        <begin position="427"/>
        <end position="430"/>
    </location>
</feature>
<feature type="strand" evidence="9">
    <location>
        <begin position="431"/>
        <end position="437"/>
    </location>
</feature>
<feature type="strand" evidence="9">
    <location>
        <begin position="444"/>
        <end position="450"/>
    </location>
</feature>
<feature type="strand" evidence="9">
    <location>
        <begin position="452"/>
        <end position="454"/>
    </location>
</feature>
<proteinExistence type="evidence at protein level"/>
<comment type="function">
    <text evidence="5">E3 ubiquitin ligase induced during late erythropoiesis. Directly binds and ubiquitinates the intermediate chain of the microtubule motor dynein (DYNC1LI1/DYNC1LI2), stimulating the degradation of the dynein holoprotein complex. May participate in the erythroblast enucleation process through regulation of nuclear polarization.</text>
</comment>
<comment type="catalytic activity">
    <reaction>
        <text>S-ubiquitinyl-[E2 ubiquitin-conjugating enzyme]-L-cysteine + [acceptor protein]-L-lysine = [E2 ubiquitin-conjugating enzyme]-L-cysteine + N(6)-ubiquitinyl-[acceptor protein]-L-lysine.</text>
        <dbReference type="EC" id="2.3.2.27"/>
    </reaction>
</comment>
<comment type="pathway">
    <text evidence="5">Protein modification; protein ubiquitination.</text>
</comment>
<comment type="tissue specificity">
    <text evidence="5">Expressed in erythroblasts.</text>
</comment>
<comment type="domain">
    <text evidence="5">The RING finger is required for ubiquitin ligase activity.</text>
</comment>
<comment type="similarity">
    <text evidence="7">Belongs to the TRIM/RBCC family.</text>
</comment>
<comment type="sequence caution" evidence="7">
    <conflict type="erroneous initiation">
        <sequence resource="EMBL-CDS" id="AAM63958"/>
    </conflict>
</comment>
<gene>
    <name type="primary">TRIM58</name>
</gene>
<evidence type="ECO:0000255" key="1"/>
<evidence type="ECO:0000255" key="2">
    <source>
        <dbReference type="PROSITE-ProRule" id="PRU00024"/>
    </source>
</evidence>
<evidence type="ECO:0000255" key="3">
    <source>
        <dbReference type="PROSITE-ProRule" id="PRU00175"/>
    </source>
</evidence>
<evidence type="ECO:0000255" key="4">
    <source>
        <dbReference type="PROSITE-ProRule" id="PRU00548"/>
    </source>
</evidence>
<evidence type="ECO:0000269" key="5">
    <source>
    </source>
</evidence>
<evidence type="ECO:0000269" key="6">
    <source ref="1"/>
</evidence>
<evidence type="ECO:0000305" key="7"/>
<evidence type="ECO:0007829" key="8">
    <source>
        <dbReference type="PDB" id="8PD4"/>
    </source>
</evidence>
<evidence type="ECO:0007829" key="9">
    <source>
        <dbReference type="PDB" id="8PD6"/>
    </source>
</evidence>
<dbReference type="EC" id="2.3.2.27"/>
<dbReference type="EMBL" id="AF327057">
    <property type="protein sequence ID" value="AAM63958.1"/>
    <property type="status" value="ALT_INIT"/>
    <property type="molecule type" value="mRNA"/>
</dbReference>
<dbReference type="EMBL" id="BC074748">
    <property type="protein sequence ID" value="AAH74748.1"/>
    <property type="molecule type" value="mRNA"/>
</dbReference>
<dbReference type="CCDS" id="CCDS1636.1"/>
<dbReference type="RefSeq" id="NP_056246.3">
    <property type="nucleotide sequence ID" value="NM_015431.3"/>
</dbReference>
<dbReference type="PDB" id="8PD4">
    <property type="method" value="X-ray"/>
    <property type="resolution" value="2.71 A"/>
    <property type="chains" value="A/B=251-466"/>
</dbReference>
<dbReference type="PDB" id="8PD6">
    <property type="method" value="X-ray"/>
    <property type="resolution" value="1.30 A"/>
    <property type="chains" value="A=251-466"/>
</dbReference>
<dbReference type="PDBsum" id="8PD4"/>
<dbReference type="PDBsum" id="8PD6"/>
<dbReference type="SMR" id="Q8NG06"/>
<dbReference type="BioGRID" id="117401">
    <property type="interactions" value="21"/>
</dbReference>
<dbReference type="FunCoup" id="Q8NG06">
    <property type="interactions" value="714"/>
</dbReference>
<dbReference type="STRING" id="9606.ENSP00000355437"/>
<dbReference type="BindingDB" id="Q8NG06"/>
<dbReference type="ChEMBL" id="CHEMBL5465334"/>
<dbReference type="iPTMnet" id="Q8NG06"/>
<dbReference type="PhosphoSitePlus" id="Q8NG06"/>
<dbReference type="BioMuta" id="TRIM58"/>
<dbReference type="DMDM" id="124053416"/>
<dbReference type="jPOST" id="Q8NG06"/>
<dbReference type="MassIVE" id="Q8NG06"/>
<dbReference type="PaxDb" id="9606-ENSP00000355437"/>
<dbReference type="PeptideAtlas" id="Q8NG06"/>
<dbReference type="ProteomicsDB" id="73404"/>
<dbReference type="Pumba" id="Q8NG06"/>
<dbReference type="Antibodypedia" id="20850">
    <property type="antibodies" value="105 antibodies from 19 providers"/>
</dbReference>
<dbReference type="DNASU" id="25893"/>
<dbReference type="Ensembl" id="ENST00000366481.4">
    <property type="protein sequence ID" value="ENSP00000355437.3"/>
    <property type="gene ID" value="ENSG00000162722.9"/>
</dbReference>
<dbReference type="GeneID" id="25893"/>
<dbReference type="KEGG" id="hsa:25893"/>
<dbReference type="MANE-Select" id="ENST00000366481.4">
    <property type="protein sequence ID" value="ENSP00000355437.3"/>
    <property type="RefSeq nucleotide sequence ID" value="NM_015431.4"/>
    <property type="RefSeq protein sequence ID" value="NP_056246.3"/>
</dbReference>
<dbReference type="UCSC" id="uc001ido.4">
    <property type="organism name" value="human"/>
</dbReference>
<dbReference type="AGR" id="HGNC:24150"/>
<dbReference type="CTD" id="25893"/>
<dbReference type="DisGeNET" id="25893"/>
<dbReference type="GeneCards" id="TRIM58"/>
<dbReference type="HGNC" id="HGNC:24150">
    <property type="gene designation" value="TRIM58"/>
</dbReference>
<dbReference type="HPA" id="ENSG00000162722">
    <property type="expression patterns" value="Group enriched (bone marrow, thyroid gland)"/>
</dbReference>
<dbReference type="MIM" id="620527">
    <property type="type" value="gene"/>
</dbReference>
<dbReference type="neXtProt" id="NX_Q8NG06"/>
<dbReference type="OpenTargets" id="ENSG00000162722"/>
<dbReference type="PharmGKB" id="PA134942549"/>
<dbReference type="VEuPathDB" id="HostDB:ENSG00000162722"/>
<dbReference type="eggNOG" id="KOG2177">
    <property type="taxonomic scope" value="Eukaryota"/>
</dbReference>
<dbReference type="GeneTree" id="ENSGT00940000162246"/>
<dbReference type="HOGENOM" id="CLU_013137_0_3_1"/>
<dbReference type="InParanoid" id="Q8NG06"/>
<dbReference type="OMA" id="KTACRIP"/>
<dbReference type="OrthoDB" id="128536at2759"/>
<dbReference type="PAN-GO" id="Q8NG06">
    <property type="GO annotations" value="5 GO annotations based on evolutionary models"/>
</dbReference>
<dbReference type="PhylomeDB" id="Q8NG06"/>
<dbReference type="TreeFam" id="TF338674"/>
<dbReference type="PathwayCommons" id="Q8NG06"/>
<dbReference type="SIGNOR" id="Q8NG06"/>
<dbReference type="UniPathway" id="UPA00143"/>
<dbReference type="BioGRID-ORCS" id="25893">
    <property type="hits" value="13 hits in 1186 CRISPR screens"/>
</dbReference>
<dbReference type="ChiTaRS" id="TRIM58">
    <property type="organism name" value="human"/>
</dbReference>
<dbReference type="GenomeRNAi" id="25893"/>
<dbReference type="Pharos" id="Q8NG06">
    <property type="development level" value="Tbio"/>
</dbReference>
<dbReference type="PRO" id="PR:Q8NG06"/>
<dbReference type="Proteomes" id="UP000005640">
    <property type="component" value="Chromosome 1"/>
</dbReference>
<dbReference type="RNAct" id="Q8NG06">
    <property type="molecule type" value="protein"/>
</dbReference>
<dbReference type="Bgee" id="ENSG00000162722">
    <property type="expression patterns" value="Expressed in trabecular bone tissue and 117 other cell types or tissues"/>
</dbReference>
<dbReference type="GO" id="GO:0005737">
    <property type="term" value="C:cytoplasm"/>
    <property type="evidence" value="ECO:0000318"/>
    <property type="project" value="GO_Central"/>
</dbReference>
<dbReference type="GO" id="GO:0045504">
    <property type="term" value="F:dynein heavy chain binding"/>
    <property type="evidence" value="ECO:0007669"/>
    <property type="project" value="Ensembl"/>
</dbReference>
<dbReference type="GO" id="GO:0045505">
    <property type="term" value="F:dynein intermediate chain binding"/>
    <property type="evidence" value="ECO:0007669"/>
    <property type="project" value="Ensembl"/>
</dbReference>
<dbReference type="GO" id="GO:0061630">
    <property type="term" value="F:ubiquitin protein ligase activity"/>
    <property type="evidence" value="ECO:0000318"/>
    <property type="project" value="GO_Central"/>
</dbReference>
<dbReference type="GO" id="GO:0008270">
    <property type="term" value="F:zinc ion binding"/>
    <property type="evidence" value="ECO:0007669"/>
    <property type="project" value="UniProtKB-KW"/>
</dbReference>
<dbReference type="GO" id="GO:0045087">
    <property type="term" value="P:innate immune response"/>
    <property type="evidence" value="ECO:0000318"/>
    <property type="project" value="GO_Central"/>
</dbReference>
<dbReference type="GO" id="GO:0061931">
    <property type="term" value="P:positive regulation of erythrocyte enucleation"/>
    <property type="evidence" value="ECO:0007669"/>
    <property type="project" value="Ensembl"/>
</dbReference>
<dbReference type="GO" id="GO:0051865">
    <property type="term" value="P:protein autoubiquitination"/>
    <property type="evidence" value="ECO:0007669"/>
    <property type="project" value="Ensembl"/>
</dbReference>
<dbReference type="GO" id="GO:0000209">
    <property type="term" value="P:protein polyubiquitination"/>
    <property type="evidence" value="ECO:0007669"/>
    <property type="project" value="Ensembl"/>
</dbReference>
<dbReference type="GO" id="GO:0010468">
    <property type="term" value="P:regulation of gene expression"/>
    <property type="evidence" value="ECO:0000318"/>
    <property type="project" value="GO_Central"/>
</dbReference>
<dbReference type="GO" id="GO:1902838">
    <property type="term" value="P:regulation of nuclear migration along microtubule"/>
    <property type="evidence" value="ECO:0007669"/>
    <property type="project" value="Ensembl"/>
</dbReference>
<dbReference type="GO" id="GO:0006511">
    <property type="term" value="P:ubiquitin-dependent protein catabolic process"/>
    <property type="evidence" value="ECO:0007669"/>
    <property type="project" value="Ensembl"/>
</dbReference>
<dbReference type="CDD" id="cd19780">
    <property type="entry name" value="Bbox2_TRIM39-like"/>
    <property type="match status" value="1"/>
</dbReference>
<dbReference type="CDD" id="cd16606">
    <property type="entry name" value="RING-HC_TRIM58_C-IV"/>
    <property type="match status" value="1"/>
</dbReference>
<dbReference type="CDD" id="cd15816">
    <property type="entry name" value="SPRY_PRY_TRIM58"/>
    <property type="match status" value="1"/>
</dbReference>
<dbReference type="CDD" id="cd22249">
    <property type="entry name" value="UDM1_RNF168_RNF169-like"/>
    <property type="match status" value="1"/>
</dbReference>
<dbReference type="FunFam" id="2.60.120.920:FF:000004">
    <property type="entry name" value="Butyrophilin subfamily 1 member A1"/>
    <property type="match status" value="1"/>
</dbReference>
<dbReference type="Gene3D" id="2.60.120.920">
    <property type="match status" value="1"/>
</dbReference>
<dbReference type="Gene3D" id="3.30.160.60">
    <property type="entry name" value="Classic Zinc Finger"/>
    <property type="match status" value="1"/>
</dbReference>
<dbReference type="Gene3D" id="3.30.40.10">
    <property type="entry name" value="Zinc/RING finger domain, C3HC4 (zinc finger)"/>
    <property type="match status" value="1"/>
</dbReference>
<dbReference type="InterPro" id="IPR001870">
    <property type="entry name" value="B30.2/SPRY"/>
</dbReference>
<dbReference type="InterPro" id="IPR043136">
    <property type="entry name" value="B30.2/SPRY_sf"/>
</dbReference>
<dbReference type="InterPro" id="IPR003879">
    <property type="entry name" value="Butyrophylin_SPRY"/>
</dbReference>
<dbReference type="InterPro" id="IPR013320">
    <property type="entry name" value="ConA-like_dom_sf"/>
</dbReference>
<dbReference type="InterPro" id="IPR006574">
    <property type="entry name" value="PRY"/>
</dbReference>
<dbReference type="InterPro" id="IPR035787">
    <property type="entry name" value="SPRY/PRY_TRIM58"/>
</dbReference>
<dbReference type="InterPro" id="IPR003877">
    <property type="entry name" value="SPRY_dom"/>
</dbReference>
<dbReference type="InterPro" id="IPR050143">
    <property type="entry name" value="TRIM/RBCC"/>
</dbReference>
<dbReference type="InterPro" id="IPR042699">
    <property type="entry name" value="TRIM58_RING-HC"/>
</dbReference>
<dbReference type="InterPro" id="IPR000315">
    <property type="entry name" value="Znf_B-box"/>
</dbReference>
<dbReference type="InterPro" id="IPR001841">
    <property type="entry name" value="Znf_RING"/>
</dbReference>
<dbReference type="InterPro" id="IPR013083">
    <property type="entry name" value="Znf_RING/FYVE/PHD"/>
</dbReference>
<dbReference type="InterPro" id="IPR017907">
    <property type="entry name" value="Znf_RING_CS"/>
</dbReference>
<dbReference type="PANTHER" id="PTHR24103">
    <property type="entry name" value="E3 UBIQUITIN-PROTEIN LIGASE TRIM"/>
    <property type="match status" value="1"/>
</dbReference>
<dbReference type="Pfam" id="PF13765">
    <property type="entry name" value="PRY"/>
    <property type="match status" value="1"/>
</dbReference>
<dbReference type="Pfam" id="PF00622">
    <property type="entry name" value="SPRY"/>
    <property type="match status" value="1"/>
</dbReference>
<dbReference type="Pfam" id="PF00643">
    <property type="entry name" value="zf-B_box"/>
    <property type="match status" value="1"/>
</dbReference>
<dbReference type="Pfam" id="PF15227">
    <property type="entry name" value="zf-C3HC4_4"/>
    <property type="match status" value="1"/>
</dbReference>
<dbReference type="PRINTS" id="PR01407">
    <property type="entry name" value="BUTYPHLNCDUF"/>
</dbReference>
<dbReference type="SMART" id="SM00336">
    <property type="entry name" value="BBOX"/>
    <property type="match status" value="1"/>
</dbReference>
<dbReference type="SMART" id="SM00589">
    <property type="entry name" value="PRY"/>
    <property type="match status" value="1"/>
</dbReference>
<dbReference type="SMART" id="SM00184">
    <property type="entry name" value="RING"/>
    <property type="match status" value="1"/>
</dbReference>
<dbReference type="SMART" id="SM00449">
    <property type="entry name" value="SPRY"/>
    <property type="match status" value="1"/>
</dbReference>
<dbReference type="SUPFAM" id="SSF57845">
    <property type="entry name" value="B-box zinc-binding domain"/>
    <property type="match status" value="1"/>
</dbReference>
<dbReference type="SUPFAM" id="SSF49899">
    <property type="entry name" value="Concanavalin A-like lectins/glucanases"/>
    <property type="match status" value="1"/>
</dbReference>
<dbReference type="SUPFAM" id="SSF57850">
    <property type="entry name" value="RING/U-box"/>
    <property type="match status" value="1"/>
</dbReference>
<dbReference type="PROSITE" id="PS50188">
    <property type="entry name" value="B302_SPRY"/>
    <property type="match status" value="1"/>
</dbReference>
<dbReference type="PROSITE" id="PS50119">
    <property type="entry name" value="ZF_BBOX"/>
    <property type="match status" value="1"/>
</dbReference>
<dbReference type="PROSITE" id="PS00518">
    <property type="entry name" value="ZF_RING_1"/>
    <property type="match status" value="1"/>
</dbReference>
<dbReference type="PROSITE" id="PS50089">
    <property type="entry name" value="ZF_RING_2"/>
    <property type="match status" value="1"/>
</dbReference>
<accession>Q8NG06</accession>
<accession>Q6B0H9</accession>
<reference key="1">
    <citation type="submission" date="2000-12" db="EMBL/GenBank/DDBJ databases">
        <authorList>
            <person name="Piecha D."/>
            <person name="Petersohn D."/>
            <person name="Eckes B."/>
            <person name="Krieg T."/>
        </authorList>
    </citation>
    <scope>NUCLEOTIDE SEQUENCE [MRNA]</scope>
    <scope>VARIANTS SER-3 AND MET-374</scope>
    <source>
        <tissue>Placenta</tissue>
    </source>
</reference>
<reference key="2">
    <citation type="journal article" date="2004" name="Genome Res.">
        <title>The status, quality, and expansion of the NIH full-length cDNA project: the Mammalian Gene Collection (MGC).</title>
        <authorList>
            <consortium name="The MGC Project Team"/>
        </authorList>
    </citation>
    <scope>NUCLEOTIDE SEQUENCE [LARGE SCALE MRNA] OF 137-342</scope>
    <source>
        <tissue>Lung</tissue>
    </source>
</reference>
<reference key="3">
    <citation type="journal article" date="2014" name="Dev. Cell">
        <title>Trim58 degrades Dynein and regulates terminal erythropoiesis.</title>
        <authorList>
            <person name="Thom C.S."/>
            <person name="Traxler E.A."/>
            <person name="Khandros E."/>
            <person name="Nickas J.M."/>
            <person name="Zhou O.Y."/>
            <person name="Lazarus J.E."/>
            <person name="Silva A.P."/>
            <person name="Prabhu D."/>
            <person name="Yao Y."/>
            <person name="Aribeana C."/>
            <person name="Fuchs S.Y."/>
            <person name="Mackay J.P."/>
            <person name="Holzbaur E.L."/>
            <person name="Weiss M.J."/>
        </authorList>
    </citation>
    <scope>FUNCTION</scope>
    <scope>TISSUE SPECIFICITY</scope>
</reference>
<protein>
    <recommendedName>
        <fullName>E3 ubiquitin-protein ligase TRIM58</fullName>
        <ecNumber>2.3.2.27</ecNumber>
    </recommendedName>
    <alternativeName>
        <fullName>Protein BIA2</fullName>
    </alternativeName>
    <alternativeName>
        <fullName evidence="7">RING-type E3 ubiquitin transferase TRIM58</fullName>
    </alternativeName>
    <alternativeName>
        <fullName>Tripartite motif-containing protein 58</fullName>
    </alternativeName>
</protein>
<name>TRI58_HUMAN</name>